<sequence length="296" mass="33354">MAAGGPGTEPAAPVSSTSSLPLAALNMRVRRRLSLFLNVRTQVAADWTALAEEMDFEYLEIRQLETHADPTGRLLDAWQGRPGASVGRLLELLTKLGRDDVLLELGPSIEEDCQKYILKQQQEEAEKPLQVAAVDSSVPRTAELAGITTLDDPLGHMPERFDAFICYCPSDIQFVQEMIRQLEQTNYRLKLCVSDRDVLPGTCVWSIASELIEKRCRRMVVVVSDDYLQSKECDFQTKFALSLSPGAHQKRLIPIKYKAMKKEFPSILRFITVCDYTNPCTKSWFWTRLAKALSLP</sequence>
<proteinExistence type="evidence at transcript level"/>
<protein>
    <recommendedName>
        <fullName>Myeloid differentiation primary response protein MyD88</fullName>
    </recommendedName>
</protein>
<gene>
    <name type="primary">Myd88</name>
</gene>
<evidence type="ECO:0000250" key="1"/>
<evidence type="ECO:0000250" key="2">
    <source>
        <dbReference type="UniProtKB" id="P22366"/>
    </source>
</evidence>
<evidence type="ECO:0000250" key="3">
    <source>
        <dbReference type="UniProtKB" id="Q99836"/>
    </source>
</evidence>
<evidence type="ECO:0000255" key="4">
    <source>
        <dbReference type="PROSITE-ProRule" id="PRU00064"/>
    </source>
</evidence>
<evidence type="ECO:0000255" key="5">
    <source>
        <dbReference type="PROSITE-ProRule" id="PRU00204"/>
    </source>
</evidence>
<comment type="function">
    <text evidence="2 3">Adapter protein involved in the Toll-like receptor and IL-1 receptor signaling pathway in the innate immune response. Acts via IRAK1, IRAK2, IRF7 and TRAF6, leading to NF-kappa-B activation, cytokine secretion and the inflammatory response. Increases IL-8 transcription. Involved in IL-18-mediated signaling pathway. Activates IRF1 resulting in its rapid migration into the nucleus to mediate an efficient induction of IFN-beta, NOS2/INOS, and IL12A genes. Upon TLR8 activation by GU-rich single-stranded RNA (GU-rich RNA) derived from viruses, induces IL1B release through NLRP3 inflammasome activation (By similarity). MyD88-mediated signaling in intestinal epithelial cells is crucial for maintenance of gut homeostasis and controls the expression of the antimicrobial lectin REG3G in the small intestine (By similarity).</text>
</comment>
<comment type="subunit">
    <text evidence="3">Homodimer. Also forms heterodimers with TIRAP. Binds to TLR2, TLR4, TLR5, IRAK1, IRAK2 and IRAK4 via their respective TIR domains. Interacts with IL18R1. Interacts with BMX, IL1RL1, IKBKE and IRF7. Interacts with LRRFIP1 and LRRFIP2; this interaction positively regulates Toll-like receptor (TLR) signaling in response to agonist. Interacts with FLII. LRRFIP1 and LRRFIP2 compete with FLII for MYD88-binding. Interacts with IRF1. Upon IL1B treatment, forms a complex with PELI1, IRAK1, IRAK4 and TRAF6; this complex recruits MAP3K7/TAK1, TAB1 and TAB2 to mediate NF-kappa-B activation. Direct binding of SMAD6 to PELI1 prevents the complex formation and hence negatively regulates IL1R-TLR signaling and eventually NF-kappa-B-mediated gene expression. May interact with PIK3AP1. Interacts (via TIR domain) with DHX9 (via H2A and OB-fold regions); this interaction is direct.</text>
</comment>
<comment type="subcellular location">
    <subcellularLocation>
        <location evidence="1">Cytoplasm</location>
    </subcellularLocation>
</comment>
<comment type="domain">
    <text evidence="1">The intermediate domain (ID) is required for the phosphorylation and activation of IRAK.</text>
</comment>
<comment type="PTM">
    <text evidence="3">Ubiquitinated; undergoes 'Lys-63'-linked polyubiquitination. OTUD4 specifically hydrolyzes 'Lys-63'-linked polyubiquitinated MYD88. Deubiquitinated by USP3 that cleaves 'Lys-63'-linked ubiquitin chains leading to inhibition of MYD88-induced NF-kappa-B signaling.</text>
</comment>
<accession>B6CJX2</accession>
<organism>
    <name type="scientific">Cercocebus atys</name>
    <name type="common">Sooty mangabey</name>
    <name type="synonym">Cercocebus torquatus atys</name>
    <dbReference type="NCBI Taxonomy" id="9531"/>
    <lineage>
        <taxon>Eukaryota</taxon>
        <taxon>Metazoa</taxon>
        <taxon>Chordata</taxon>
        <taxon>Craniata</taxon>
        <taxon>Vertebrata</taxon>
        <taxon>Euteleostomi</taxon>
        <taxon>Mammalia</taxon>
        <taxon>Eutheria</taxon>
        <taxon>Euarchontoglires</taxon>
        <taxon>Primates</taxon>
        <taxon>Haplorrhini</taxon>
        <taxon>Catarrhini</taxon>
        <taxon>Cercopithecidae</taxon>
        <taxon>Cercopithecinae</taxon>
        <taxon>Cercocebus</taxon>
    </lineage>
</organism>
<keyword id="KW-0963">Cytoplasm</keyword>
<keyword id="KW-0391">Immunity</keyword>
<keyword id="KW-0395">Inflammatory response</keyword>
<keyword id="KW-0399">Innate immunity</keyword>
<keyword id="KW-0597">Phosphoprotein</keyword>
<keyword id="KW-1185">Reference proteome</keyword>
<keyword id="KW-0832">Ubl conjugation</keyword>
<name>MYD88_CERAT</name>
<feature type="chain" id="PRO_0000393130" description="Myeloid differentiation primary response protein MyD88">
    <location>
        <begin position="1"/>
        <end position="296"/>
    </location>
</feature>
<feature type="domain" description="Death" evidence="4">
    <location>
        <begin position="32"/>
        <end position="109"/>
    </location>
</feature>
<feature type="domain" description="TIR" evidence="5">
    <location>
        <begin position="159"/>
        <end position="293"/>
    </location>
</feature>
<feature type="region of interest" description="Intermediate domain" evidence="1">
    <location>
        <begin position="110"/>
        <end position="155"/>
    </location>
</feature>
<feature type="modified residue" description="Phosphoserine" evidence="3">
    <location>
        <position position="244"/>
    </location>
</feature>
<dbReference type="EMBL" id="EU204915">
    <property type="protein sequence ID" value="ABY64973.1"/>
    <property type="molecule type" value="mRNA"/>
</dbReference>
<dbReference type="RefSeq" id="NP_001292878.1">
    <property type="nucleotide sequence ID" value="NM_001305949.1"/>
</dbReference>
<dbReference type="SMR" id="B6CJX2"/>
<dbReference type="STRING" id="9531.ENSCATP00000043331"/>
<dbReference type="GeneID" id="105573904"/>
<dbReference type="CTD" id="4615"/>
<dbReference type="Proteomes" id="UP000233060">
    <property type="component" value="Unassembled WGS sequence"/>
</dbReference>
<dbReference type="GO" id="GO:0005737">
    <property type="term" value="C:cytoplasm"/>
    <property type="evidence" value="ECO:0007669"/>
    <property type="project" value="UniProtKB-SubCell"/>
</dbReference>
<dbReference type="GO" id="GO:0005886">
    <property type="term" value="C:plasma membrane"/>
    <property type="evidence" value="ECO:0007669"/>
    <property type="project" value="TreeGrafter"/>
</dbReference>
<dbReference type="GO" id="GO:0070976">
    <property type="term" value="F:TIR domain binding"/>
    <property type="evidence" value="ECO:0007669"/>
    <property type="project" value="InterPro"/>
</dbReference>
<dbReference type="GO" id="GO:0035325">
    <property type="term" value="F:Toll-like receptor binding"/>
    <property type="evidence" value="ECO:0007669"/>
    <property type="project" value="TreeGrafter"/>
</dbReference>
<dbReference type="GO" id="GO:0050830">
    <property type="term" value="P:defense response to Gram-positive bacterium"/>
    <property type="evidence" value="ECO:0000250"/>
    <property type="project" value="UniProtKB"/>
</dbReference>
<dbReference type="GO" id="GO:0051607">
    <property type="term" value="P:defense response to virus"/>
    <property type="evidence" value="ECO:0000250"/>
    <property type="project" value="UniProtKB"/>
</dbReference>
<dbReference type="GO" id="GO:0006954">
    <property type="term" value="P:inflammatory response"/>
    <property type="evidence" value="ECO:0007669"/>
    <property type="project" value="UniProtKB-KW"/>
</dbReference>
<dbReference type="GO" id="GO:0045087">
    <property type="term" value="P:innate immune response"/>
    <property type="evidence" value="ECO:0007669"/>
    <property type="project" value="UniProtKB-KW"/>
</dbReference>
<dbReference type="GO" id="GO:0002755">
    <property type="term" value="P:MyD88-dependent toll-like receptor signaling pathway"/>
    <property type="evidence" value="ECO:0007669"/>
    <property type="project" value="InterPro"/>
</dbReference>
<dbReference type="GO" id="GO:0043123">
    <property type="term" value="P:positive regulation of canonical NF-kappaB signal transduction"/>
    <property type="evidence" value="ECO:0007669"/>
    <property type="project" value="InterPro"/>
</dbReference>
<dbReference type="GO" id="GO:0032731">
    <property type="term" value="P:positive regulation of interleukin-1 beta production"/>
    <property type="evidence" value="ECO:0000250"/>
    <property type="project" value="UniProtKB"/>
</dbReference>
<dbReference type="GO" id="GO:1900227">
    <property type="term" value="P:positive regulation of NLRP3 inflammasome complex assembly"/>
    <property type="evidence" value="ECO:0000250"/>
    <property type="project" value="UniProtKB"/>
</dbReference>
<dbReference type="GO" id="GO:0008063">
    <property type="term" value="P:Toll signaling pathway"/>
    <property type="evidence" value="ECO:0007669"/>
    <property type="project" value="TreeGrafter"/>
</dbReference>
<dbReference type="GO" id="GO:0034142">
    <property type="term" value="P:toll-like receptor 4 signaling pathway"/>
    <property type="evidence" value="ECO:0007669"/>
    <property type="project" value="TreeGrafter"/>
</dbReference>
<dbReference type="GO" id="GO:0034158">
    <property type="term" value="P:toll-like receptor 8 signaling pathway"/>
    <property type="evidence" value="ECO:0000250"/>
    <property type="project" value="UniProtKB"/>
</dbReference>
<dbReference type="CDD" id="cd08312">
    <property type="entry name" value="Death_MyD88"/>
    <property type="match status" value="1"/>
</dbReference>
<dbReference type="FunFam" id="1.10.533.10:FF:000029">
    <property type="entry name" value="Myeloid differentiation primary response protein MyD88"/>
    <property type="match status" value="1"/>
</dbReference>
<dbReference type="FunFam" id="3.40.50.10140:FF:000005">
    <property type="entry name" value="Myeloid differentiation primary response protein MyD88"/>
    <property type="match status" value="1"/>
</dbReference>
<dbReference type="Gene3D" id="1.10.533.10">
    <property type="entry name" value="Death Domain, Fas"/>
    <property type="match status" value="1"/>
</dbReference>
<dbReference type="Gene3D" id="3.40.50.10140">
    <property type="entry name" value="Toll/interleukin-1 receptor homology (TIR) domain"/>
    <property type="match status" value="1"/>
</dbReference>
<dbReference type="InterPro" id="IPR011029">
    <property type="entry name" value="DEATH-like_dom_sf"/>
</dbReference>
<dbReference type="InterPro" id="IPR000488">
    <property type="entry name" value="Death_dom"/>
</dbReference>
<dbReference type="InterPro" id="IPR034249">
    <property type="entry name" value="MyD88_Death"/>
</dbReference>
<dbReference type="InterPro" id="IPR017281">
    <property type="entry name" value="Myelin_different_resp_MyD88"/>
</dbReference>
<dbReference type="InterPro" id="IPR000157">
    <property type="entry name" value="TIR_dom"/>
</dbReference>
<dbReference type="InterPro" id="IPR035897">
    <property type="entry name" value="Toll_tir_struct_dom_sf"/>
</dbReference>
<dbReference type="PANTHER" id="PTHR15079">
    <property type="entry name" value="MYD88"/>
    <property type="match status" value="1"/>
</dbReference>
<dbReference type="PANTHER" id="PTHR15079:SF3">
    <property type="entry name" value="MYELOID DIFFERENTIATION PRIMARY RESPONSE PROTEIN MYD88"/>
    <property type="match status" value="1"/>
</dbReference>
<dbReference type="Pfam" id="PF00531">
    <property type="entry name" value="Death"/>
    <property type="match status" value="1"/>
</dbReference>
<dbReference type="Pfam" id="PF13676">
    <property type="entry name" value="TIR_2"/>
    <property type="match status" value="1"/>
</dbReference>
<dbReference type="PIRSF" id="PIRSF037756">
    <property type="entry name" value="MyD88"/>
    <property type="match status" value="1"/>
</dbReference>
<dbReference type="SMART" id="SM00005">
    <property type="entry name" value="DEATH"/>
    <property type="match status" value="1"/>
</dbReference>
<dbReference type="SMART" id="SM00255">
    <property type="entry name" value="TIR"/>
    <property type="match status" value="1"/>
</dbReference>
<dbReference type="SUPFAM" id="SSF47986">
    <property type="entry name" value="DEATH domain"/>
    <property type="match status" value="1"/>
</dbReference>
<dbReference type="SUPFAM" id="SSF52200">
    <property type="entry name" value="Toll/Interleukin receptor TIR domain"/>
    <property type="match status" value="1"/>
</dbReference>
<dbReference type="PROSITE" id="PS50017">
    <property type="entry name" value="DEATH_DOMAIN"/>
    <property type="match status" value="1"/>
</dbReference>
<dbReference type="PROSITE" id="PS50104">
    <property type="entry name" value="TIR"/>
    <property type="match status" value="1"/>
</dbReference>
<reference key="1">
    <citation type="journal article" date="2008" name="Nat. Med.">
        <title>Divergent TLR7 and TLR9 signaling and type I interferon production distinguish pathogenic and nonpathogenic AIDS virus infections.</title>
        <authorList>
            <person name="Mandl J.N."/>
            <person name="Barry A.P."/>
            <person name="Vanderford T.H."/>
            <person name="Kozyr N."/>
            <person name="Chavan R."/>
            <person name="Klucking S."/>
            <person name="Barrat F.J."/>
            <person name="Coffman R.L."/>
            <person name="Staprans S.I."/>
            <person name="Feinberg M.B."/>
        </authorList>
    </citation>
    <scope>NUCLEOTIDE SEQUENCE [MRNA]</scope>
</reference>